<gene>
    <name evidence="1" type="primary">matK</name>
</gene>
<reference key="1">
    <citation type="submission" date="2000-08" db="EMBL/GenBank/DDBJ databases">
        <title>Phylogenetic relationships of East Asia Curcuma (Zingiberaceae): inferences based on plastid trnK gene sequence data.</title>
        <authorList>
            <person name="Cao H."/>
            <person name="Sasaki Y."/>
            <person name="Fushimi H."/>
            <person name="Komatsu K."/>
        </authorList>
    </citation>
    <scope>NUCLEOTIDE SEQUENCE [GENOMIC DNA]</scope>
</reference>
<dbReference type="EMBL" id="AB047755">
    <property type="protein sequence ID" value="BAD12071.1"/>
    <property type="molecule type" value="Genomic_DNA"/>
</dbReference>
<dbReference type="GO" id="GO:0009507">
    <property type="term" value="C:chloroplast"/>
    <property type="evidence" value="ECO:0007669"/>
    <property type="project" value="UniProtKB-SubCell"/>
</dbReference>
<dbReference type="GO" id="GO:0003723">
    <property type="term" value="F:RNA binding"/>
    <property type="evidence" value="ECO:0007669"/>
    <property type="project" value="UniProtKB-KW"/>
</dbReference>
<dbReference type="GO" id="GO:0006397">
    <property type="term" value="P:mRNA processing"/>
    <property type="evidence" value="ECO:0007669"/>
    <property type="project" value="UniProtKB-KW"/>
</dbReference>
<dbReference type="GO" id="GO:0008380">
    <property type="term" value="P:RNA splicing"/>
    <property type="evidence" value="ECO:0007669"/>
    <property type="project" value="UniProtKB-UniRule"/>
</dbReference>
<dbReference type="GO" id="GO:0008033">
    <property type="term" value="P:tRNA processing"/>
    <property type="evidence" value="ECO:0007669"/>
    <property type="project" value="UniProtKB-KW"/>
</dbReference>
<dbReference type="HAMAP" id="MF_01390">
    <property type="entry name" value="MatK"/>
    <property type="match status" value="1"/>
</dbReference>
<dbReference type="InterPro" id="IPR024937">
    <property type="entry name" value="Domain_X"/>
</dbReference>
<dbReference type="InterPro" id="IPR002866">
    <property type="entry name" value="Maturase_MatK"/>
</dbReference>
<dbReference type="InterPro" id="IPR024942">
    <property type="entry name" value="Maturase_MatK_N"/>
</dbReference>
<dbReference type="PANTHER" id="PTHR34811">
    <property type="entry name" value="MATURASE K"/>
    <property type="match status" value="1"/>
</dbReference>
<dbReference type="PANTHER" id="PTHR34811:SF1">
    <property type="entry name" value="MATURASE K"/>
    <property type="match status" value="1"/>
</dbReference>
<dbReference type="Pfam" id="PF01348">
    <property type="entry name" value="Intron_maturas2"/>
    <property type="match status" value="1"/>
</dbReference>
<dbReference type="Pfam" id="PF01824">
    <property type="entry name" value="MatK_N"/>
    <property type="match status" value="1"/>
</dbReference>
<keyword id="KW-0150">Chloroplast</keyword>
<keyword id="KW-0507">mRNA processing</keyword>
<keyword id="KW-0934">Plastid</keyword>
<keyword id="KW-0694">RNA-binding</keyword>
<keyword id="KW-0819">tRNA processing</keyword>
<feature type="chain" id="PRO_0000143797" description="Maturase K">
    <location>
        <begin position="1"/>
        <end position="515"/>
    </location>
</feature>
<protein>
    <recommendedName>
        <fullName evidence="1">Maturase K</fullName>
    </recommendedName>
    <alternativeName>
        <fullName evidence="1">Intron maturase</fullName>
    </alternativeName>
</protein>
<sequence>MEELQGYLEEDRSRQQQFLYPLLFQEYIYVFAYDHGLNSSIFYEPQNSLGYDNKFSSVLVKRLIIRMYQKNYLIYSVNDIYQNIFVGHNNYFYFNFFSQILSEGFAVIVEIPFSLQLISSLEEKEIPKSHNLQSSHSIFPFLEDKLLHLNYLSDILIPYPVHMEILVQMLQSWIQDVLSLHLLQFFLHEYYNWNSLIIPKKSIYVFSKENKRLFWFLYNLYIYEYEFLLVFPCKQSSFLRLISSGVLLERIHFYVKIEHLGVCRIFCQKTLWIFKDPFIHYIRYQGKSILGSRGTHFLMKKWKYHLVNFWQYYFHFWSQPYRIDIKKLSNYSFYFLGYFSSVQINSSMVRNQMLENSFLMYTLTKKFDTIIPIIPLIRSLSKAQFCTVSGYPISKPIWTDLADCDIINRFGRICRKLSHYYSGSSKKQSLYRMKYILRLSCARTLARKHKSSARSFLQRLSSGLLEEFFTEEEQVIFLIFPKIISFYLYGSYRERIWYLDIIRINDLVNCLLVTT</sequence>
<organism>
    <name type="scientific">Zingiber mioga</name>
    <name type="common">Myoga ginger</name>
    <name type="synonym">Japanese ginger</name>
    <dbReference type="NCBI Taxonomy" id="136225"/>
    <lineage>
        <taxon>Eukaryota</taxon>
        <taxon>Viridiplantae</taxon>
        <taxon>Streptophyta</taxon>
        <taxon>Embryophyta</taxon>
        <taxon>Tracheophyta</taxon>
        <taxon>Spermatophyta</taxon>
        <taxon>Magnoliopsida</taxon>
        <taxon>Liliopsida</taxon>
        <taxon>Zingiberales</taxon>
        <taxon>Zingiberaceae</taxon>
        <taxon>Zingiber</taxon>
    </lineage>
</organism>
<evidence type="ECO:0000255" key="1">
    <source>
        <dbReference type="HAMAP-Rule" id="MF_01390"/>
    </source>
</evidence>
<accession>Q76MH9</accession>
<proteinExistence type="inferred from homology"/>
<geneLocation type="chloroplast"/>
<name>MATK_ZINMI</name>
<comment type="function">
    <text evidence="1">Usually encoded in the trnK tRNA gene intron. Probably assists in splicing its own and other chloroplast group II introns.</text>
</comment>
<comment type="subcellular location">
    <subcellularLocation>
        <location>Plastid</location>
        <location>Chloroplast</location>
    </subcellularLocation>
</comment>
<comment type="similarity">
    <text evidence="1">Belongs to the intron maturase 2 family. MatK subfamily.</text>
</comment>